<feature type="signal peptide" evidence="2">
    <location>
        <begin position="1"/>
        <end position="23"/>
    </location>
</feature>
<feature type="chain" id="PRO_0000262720" description="Putative outer membrane protein RBE_0022">
    <location>
        <begin position="24"/>
        <end position="245"/>
    </location>
</feature>
<dbReference type="EMBL" id="CP000087">
    <property type="protein sequence ID" value="ABE04103.1"/>
    <property type="molecule type" value="Genomic_DNA"/>
</dbReference>
<dbReference type="RefSeq" id="WP_011476718.1">
    <property type="nucleotide sequence ID" value="NC_007940.1"/>
</dbReference>
<dbReference type="KEGG" id="rbe:RBE_0022"/>
<dbReference type="eggNOG" id="COG3047">
    <property type="taxonomic scope" value="Bacteria"/>
</dbReference>
<dbReference type="HOGENOM" id="CLU_1141892_0_0_5"/>
<dbReference type="OrthoDB" id="9807574at2"/>
<dbReference type="Proteomes" id="UP000001951">
    <property type="component" value="Chromosome"/>
</dbReference>
<dbReference type="GO" id="GO:0009279">
    <property type="term" value="C:cell outer membrane"/>
    <property type="evidence" value="ECO:0007669"/>
    <property type="project" value="UniProtKB-SubCell"/>
</dbReference>
<dbReference type="GO" id="GO:0055085">
    <property type="term" value="P:transmembrane transport"/>
    <property type="evidence" value="ECO:0007669"/>
    <property type="project" value="TreeGrafter"/>
</dbReference>
<dbReference type="Gene3D" id="2.40.160.20">
    <property type="match status" value="1"/>
</dbReference>
<dbReference type="InterPro" id="IPR011250">
    <property type="entry name" value="OMP/PagP_b-brl"/>
</dbReference>
<dbReference type="InterPro" id="IPR005618">
    <property type="entry name" value="OMPW"/>
</dbReference>
<dbReference type="PANTHER" id="PTHR36920">
    <property type="match status" value="1"/>
</dbReference>
<dbReference type="PANTHER" id="PTHR36920:SF1">
    <property type="entry name" value="OUTER MEMBRANE PROTEIN W"/>
    <property type="match status" value="1"/>
</dbReference>
<dbReference type="Pfam" id="PF03922">
    <property type="entry name" value="OmpW"/>
    <property type="match status" value="1"/>
</dbReference>
<dbReference type="SUPFAM" id="SSF56925">
    <property type="entry name" value="OMPA-like"/>
    <property type="match status" value="1"/>
</dbReference>
<comment type="subcellular location">
    <subcellularLocation>
        <location evidence="1">Cell outer membrane</location>
    </subcellularLocation>
</comment>
<comment type="similarity">
    <text evidence="3">Belongs to the OmpW/AlkL family.</text>
</comment>
<reference key="1">
    <citation type="journal article" date="2006" name="PLoS Genet.">
        <title>Genome sequence of Rickettsia bellii illuminates the role of amoebae in gene exchanges between intracellular pathogens.</title>
        <authorList>
            <person name="Ogata H."/>
            <person name="La Scola B."/>
            <person name="Audic S."/>
            <person name="Renesto P."/>
            <person name="Blanc G."/>
            <person name="Robert C."/>
            <person name="Fournier P.-E."/>
            <person name="Claverie J.-M."/>
            <person name="Raoult D."/>
        </authorList>
    </citation>
    <scope>NUCLEOTIDE SEQUENCE [LARGE SCALE GENOMIC DNA]</scope>
    <source>
        <strain>RML369-C</strain>
    </source>
</reference>
<protein>
    <recommendedName>
        <fullName>Putative outer membrane protein RBE_0022</fullName>
    </recommendedName>
</protein>
<evidence type="ECO:0000250" key="1"/>
<evidence type="ECO:0000255" key="2"/>
<evidence type="ECO:0000305" key="3"/>
<accession>Q1RKL1</accession>
<proteinExistence type="inferred from homology"/>
<name>Y022_RICBR</name>
<organism>
    <name type="scientific">Rickettsia bellii (strain RML369-C)</name>
    <dbReference type="NCBI Taxonomy" id="336407"/>
    <lineage>
        <taxon>Bacteria</taxon>
        <taxon>Pseudomonadati</taxon>
        <taxon>Pseudomonadota</taxon>
        <taxon>Alphaproteobacteria</taxon>
        <taxon>Rickettsiales</taxon>
        <taxon>Rickettsiaceae</taxon>
        <taxon>Rickettsieae</taxon>
        <taxon>Rickettsia</taxon>
        <taxon>belli group</taxon>
    </lineage>
</organism>
<sequence length="245" mass="26908">MIRMSKRLGVILFVSCISINSFAKSMEADVNAVPEYNYDNIPYYENEGSLLVKMRLNGVFAHAKQKNLPAPTVPQPLPVGEFVKNGYGGDISTTIFFNNYFATELSLGFNVLRTKNSVLSNVSYNYGVGATPGKSKPLYMIPATITGQFHVAPFGGIRPYVGLGYHGSYMITQSSGIKIRNGNGFVGQIGLDFYAKDDTVINLDIKQYYLNPKIVYKPSLVGNQNITSRTKLNPLVVSIGIGFSF</sequence>
<gene>
    <name type="ordered locus">RBE_0022</name>
</gene>
<keyword id="KW-0998">Cell outer membrane</keyword>
<keyword id="KW-0472">Membrane</keyword>
<keyword id="KW-0732">Signal</keyword>
<keyword id="KW-0812">Transmembrane</keyword>
<keyword id="KW-1134">Transmembrane beta strand</keyword>